<evidence type="ECO:0000255" key="1">
    <source>
        <dbReference type="HAMAP-Rule" id="MF_02113"/>
    </source>
</evidence>
<reference key="1">
    <citation type="submission" date="2005-03" db="EMBL/GenBank/DDBJ databases">
        <title>Comparison of the complete genome sequences of Rhodococcus erythropolis PR4 and Rhodococcus opacus B4.</title>
        <authorList>
            <person name="Takarada H."/>
            <person name="Sekine M."/>
            <person name="Hosoyama A."/>
            <person name="Yamada R."/>
            <person name="Fujisawa T."/>
            <person name="Omata S."/>
            <person name="Shimizu A."/>
            <person name="Tsukatani N."/>
            <person name="Tanikawa S."/>
            <person name="Fujita N."/>
            <person name="Harayama S."/>
        </authorList>
    </citation>
    <scope>NUCLEOTIDE SEQUENCE [LARGE SCALE GENOMIC DNA]</scope>
    <source>
        <strain>PR4 / NBRC 100887</strain>
    </source>
</reference>
<name>PSB_RHOE4</name>
<gene>
    <name evidence="1" type="primary">prcB</name>
    <name type="ordered locus">RER_31740</name>
</gene>
<accession>C0ZZU7</accession>
<protein>
    <recommendedName>
        <fullName evidence="1">Proteasome subunit beta</fullName>
        <ecNumber evidence="1">3.4.25.1</ecNumber>
    </recommendedName>
    <alternativeName>
        <fullName evidence="1">20S proteasome beta subunit</fullName>
    </alternativeName>
    <alternativeName>
        <fullName evidence="1">Proteasome core protein PrcB</fullName>
    </alternativeName>
</protein>
<comment type="function">
    <text evidence="1">Component of the proteasome core, a large protease complex with broad specificity involved in protein degradation.</text>
</comment>
<comment type="catalytic activity">
    <reaction evidence="1">
        <text>Cleavage of peptide bonds with very broad specificity.</text>
        <dbReference type="EC" id="3.4.25.1"/>
    </reaction>
</comment>
<comment type="activity regulation">
    <text evidence="1">The formation of the proteasomal ATPase ARC-20S proteasome complex, likely via the docking of the C-termini of ARC into the intersubunit pockets in the alpha-rings, may trigger opening of the gate for substrate entry. Interconversion between the open-gate and close-gate conformations leads to a dynamic regulation of the 20S proteasome proteolysis activity.</text>
</comment>
<comment type="pathway">
    <text evidence="1">Protein degradation; proteasomal Pup-dependent pathway.</text>
</comment>
<comment type="subunit">
    <text evidence="1">The 20S proteasome core is composed of 14 alpha and 14 beta subunits that assemble into four stacked heptameric rings, resulting in a barrel-shaped structure. The two inner rings, each composed of seven catalytic beta subunits, are sandwiched by two outer rings, each composed of seven alpha subunits. The catalytic chamber with the active sites is on the inside of the barrel. Has a gated structure, the ends of the cylinder being occluded by the N-termini of the alpha-subunits. Is capped by the proteasome-associated ATPase, ARC.</text>
</comment>
<comment type="subcellular location">
    <subcellularLocation>
        <location evidence="1">Cytoplasm</location>
    </subcellularLocation>
</comment>
<comment type="similarity">
    <text evidence="1">Belongs to the peptidase T1B family.</text>
</comment>
<organism>
    <name type="scientific">Rhodococcus erythropolis (strain PR4 / NBRC 100887)</name>
    <dbReference type="NCBI Taxonomy" id="234621"/>
    <lineage>
        <taxon>Bacteria</taxon>
        <taxon>Bacillati</taxon>
        <taxon>Actinomycetota</taxon>
        <taxon>Actinomycetes</taxon>
        <taxon>Mycobacteriales</taxon>
        <taxon>Nocardiaceae</taxon>
        <taxon>Rhodococcus</taxon>
        <taxon>Rhodococcus erythropolis group</taxon>
    </lineage>
</organism>
<feature type="propeptide" id="PRO_0000397564" description="Removed in mature form; by autocatalysis" evidence="1">
    <location>
        <begin position="1"/>
        <end position="59"/>
    </location>
</feature>
<feature type="chain" id="PRO_0000397565" description="Proteasome subunit beta">
    <location>
        <begin position="60"/>
        <end position="292"/>
    </location>
</feature>
<feature type="active site" description="Nucleophile" evidence="1">
    <location>
        <position position="60"/>
    </location>
</feature>
<proteinExistence type="inferred from homology"/>
<sequence>MTVDRAPRITDGDTRLSFGSNLSSFSEYLRVHAPEHLPQNRFADTGGVVMGGGDVAPHGTTIVAISYAGGVLLAGDRRATMGNLIASRDVQKVYVTDDYSAAGIAGTAGIAIELVRLFAVELEHYEKIEGVPLTFDGKANRLSSMVRGNLGAAMQGLAVVPLLVGYDLDAVDPSRAGRIVSYDVVGGRYEERAGYHAVGSGSLFAKSALKKLYSPGIDEDTALRFAVEALYDAADDDSATGGPDLTRGIYPTAVTITSAGAVELSTAKAAEIAREIVAARTATASPEGESAL</sequence>
<dbReference type="EC" id="3.4.25.1" evidence="1"/>
<dbReference type="EMBL" id="AP008957">
    <property type="protein sequence ID" value="BAH33882.1"/>
    <property type="molecule type" value="Genomic_DNA"/>
</dbReference>
<dbReference type="RefSeq" id="WP_019748515.1">
    <property type="nucleotide sequence ID" value="NC_012490.1"/>
</dbReference>
<dbReference type="SMR" id="C0ZZU7"/>
<dbReference type="MEROPS" id="T01.005"/>
<dbReference type="GeneID" id="57486888"/>
<dbReference type="KEGG" id="rer:RER_31740"/>
<dbReference type="eggNOG" id="COG0638">
    <property type="taxonomic scope" value="Bacteria"/>
</dbReference>
<dbReference type="HOGENOM" id="CLU_035750_2_0_11"/>
<dbReference type="UniPathway" id="UPA00997"/>
<dbReference type="Proteomes" id="UP000002204">
    <property type="component" value="Chromosome"/>
</dbReference>
<dbReference type="GO" id="GO:0005737">
    <property type="term" value="C:cytoplasm"/>
    <property type="evidence" value="ECO:0007669"/>
    <property type="project" value="UniProtKB-SubCell"/>
</dbReference>
<dbReference type="GO" id="GO:0019774">
    <property type="term" value="C:proteasome core complex, beta-subunit complex"/>
    <property type="evidence" value="ECO:0007669"/>
    <property type="project" value="UniProtKB-UniRule"/>
</dbReference>
<dbReference type="GO" id="GO:0004298">
    <property type="term" value="F:threonine-type endopeptidase activity"/>
    <property type="evidence" value="ECO:0007669"/>
    <property type="project" value="UniProtKB-UniRule"/>
</dbReference>
<dbReference type="GO" id="GO:0019941">
    <property type="term" value="P:modification-dependent protein catabolic process"/>
    <property type="evidence" value="ECO:0007669"/>
    <property type="project" value="UniProtKB-UniRule"/>
</dbReference>
<dbReference type="GO" id="GO:0010498">
    <property type="term" value="P:proteasomal protein catabolic process"/>
    <property type="evidence" value="ECO:0007669"/>
    <property type="project" value="UniProtKB-UniRule"/>
</dbReference>
<dbReference type="CDD" id="cd01906">
    <property type="entry name" value="proteasome_protease_HslV"/>
    <property type="match status" value="1"/>
</dbReference>
<dbReference type="FunFam" id="3.60.20.10:FF:000046">
    <property type="entry name" value="Proteasome subunit beta"/>
    <property type="match status" value="1"/>
</dbReference>
<dbReference type="Gene3D" id="3.60.20.10">
    <property type="entry name" value="Glutamine Phosphoribosylpyrophosphate, subunit 1, domain 1"/>
    <property type="match status" value="1"/>
</dbReference>
<dbReference type="HAMAP" id="MF_02113_B">
    <property type="entry name" value="Proteasome_B_B"/>
    <property type="match status" value="1"/>
</dbReference>
<dbReference type="InterPro" id="IPR029055">
    <property type="entry name" value="Ntn_hydrolases_N"/>
</dbReference>
<dbReference type="InterPro" id="IPR001353">
    <property type="entry name" value="Proteasome_sua/b"/>
</dbReference>
<dbReference type="InterPro" id="IPR023333">
    <property type="entry name" value="Proteasome_suB-type"/>
</dbReference>
<dbReference type="InterPro" id="IPR022483">
    <property type="entry name" value="PSB_actinobac"/>
</dbReference>
<dbReference type="NCBIfam" id="TIGR03690">
    <property type="entry name" value="20S_bact_beta"/>
    <property type="match status" value="1"/>
</dbReference>
<dbReference type="PANTHER" id="PTHR32194:SF0">
    <property type="entry name" value="ATP-DEPENDENT PROTEASE SUBUNIT HSLV"/>
    <property type="match status" value="1"/>
</dbReference>
<dbReference type="PANTHER" id="PTHR32194">
    <property type="entry name" value="METALLOPROTEASE TLDD"/>
    <property type="match status" value="1"/>
</dbReference>
<dbReference type="Pfam" id="PF00227">
    <property type="entry name" value="Proteasome"/>
    <property type="match status" value="1"/>
</dbReference>
<dbReference type="SUPFAM" id="SSF56235">
    <property type="entry name" value="N-terminal nucleophile aminohydrolases (Ntn hydrolases)"/>
    <property type="match status" value="1"/>
</dbReference>
<dbReference type="PROSITE" id="PS51476">
    <property type="entry name" value="PROTEASOME_BETA_2"/>
    <property type="match status" value="1"/>
</dbReference>
<keyword id="KW-0068">Autocatalytic cleavage</keyword>
<keyword id="KW-0963">Cytoplasm</keyword>
<keyword id="KW-0378">Hydrolase</keyword>
<keyword id="KW-0645">Protease</keyword>
<keyword id="KW-0647">Proteasome</keyword>
<keyword id="KW-0888">Threonine protease</keyword>
<keyword id="KW-0865">Zymogen</keyword>